<name>ENOPH_RAT</name>
<sequence length="261" mass="28875">MVVVSVPAEVTVILLDIEGTTTPIAFVKDILFPYIKENVKEYLQTHWEEEECQQDVSLLRKQAEEDAHLDGAVPIPVASGGDVQQMIQAVVDNVSWQMSHDRKTTALKQLQGHMWKAAFTAGRMKAEVFADVVPAVRRWREAGMKVYIYSSGSVEAQKLLFGHSTEGDILELIDGHFDTKIGHKVESDSYRKIADSIGCSTNNILFLTDVTVEASAAEEADVHVAVVVRPGNAGLTDDEKTYYNLISSFSELYLPSTQSKV</sequence>
<feature type="chain" id="PRO_0000254009" description="Enolase-phosphatase E1">
    <location>
        <begin position="1"/>
        <end position="261"/>
    </location>
</feature>
<feature type="binding site" evidence="1">
    <location>
        <position position="16"/>
    </location>
    <ligand>
        <name>Mg(2+)</name>
        <dbReference type="ChEBI" id="CHEBI:18420"/>
    </ligand>
</feature>
<feature type="binding site" evidence="1">
    <location>
        <position position="18"/>
    </location>
    <ligand>
        <name>Mg(2+)</name>
        <dbReference type="ChEBI" id="CHEBI:18420"/>
    </ligand>
</feature>
<feature type="binding site" evidence="1">
    <location>
        <begin position="150"/>
        <end position="151"/>
    </location>
    <ligand>
        <name>substrate</name>
    </ligand>
</feature>
<feature type="binding site" evidence="1">
    <location>
        <position position="184"/>
    </location>
    <ligand>
        <name>substrate</name>
    </ligand>
</feature>
<feature type="binding site" evidence="1">
    <location>
        <position position="209"/>
    </location>
    <ligand>
        <name>Mg(2+)</name>
        <dbReference type="ChEBI" id="CHEBI:18420"/>
    </ligand>
</feature>
<dbReference type="EC" id="3.1.3.77" evidence="1"/>
<dbReference type="EMBL" id="BC087697">
    <property type="protein sequence ID" value="AAH87697.1"/>
    <property type="molecule type" value="mRNA"/>
</dbReference>
<dbReference type="RefSeq" id="NP_001009391.1">
    <property type="nucleotide sequence ID" value="NM_001009391.1"/>
</dbReference>
<dbReference type="SMR" id="Q5PPH0"/>
<dbReference type="FunCoup" id="Q5PPH0">
    <property type="interactions" value="3744"/>
</dbReference>
<dbReference type="STRING" id="10116.ENSRNOP00000003083"/>
<dbReference type="iPTMnet" id="Q5PPH0"/>
<dbReference type="PhosphoSitePlus" id="Q5PPH0"/>
<dbReference type="jPOST" id="Q5PPH0"/>
<dbReference type="PaxDb" id="10116-ENSRNOP00000003083"/>
<dbReference type="Ensembl" id="ENSRNOT00000003083.4">
    <property type="protein sequence ID" value="ENSRNOP00000003083.3"/>
    <property type="gene ID" value="ENSRNOG00000002262.4"/>
</dbReference>
<dbReference type="GeneID" id="305177"/>
<dbReference type="KEGG" id="rno:305177"/>
<dbReference type="UCSC" id="RGD:1309016">
    <property type="organism name" value="rat"/>
</dbReference>
<dbReference type="AGR" id="RGD:1309016"/>
<dbReference type="CTD" id="58478"/>
<dbReference type="RGD" id="1309016">
    <property type="gene designation" value="Enoph1"/>
</dbReference>
<dbReference type="eggNOG" id="KOG2630">
    <property type="taxonomic scope" value="Eukaryota"/>
</dbReference>
<dbReference type="GeneTree" id="ENSGT00440000039914"/>
<dbReference type="HOGENOM" id="CLU_023273_0_0_1"/>
<dbReference type="InParanoid" id="Q5PPH0"/>
<dbReference type="OMA" id="LQGMVWE"/>
<dbReference type="OrthoDB" id="44078at9989"/>
<dbReference type="PhylomeDB" id="Q5PPH0"/>
<dbReference type="TreeFam" id="TF105939"/>
<dbReference type="BRENDA" id="3.1.3.77">
    <property type="organism ID" value="5301"/>
</dbReference>
<dbReference type="Reactome" id="R-RNO-1237112">
    <property type="pathway name" value="Methionine salvage pathway"/>
</dbReference>
<dbReference type="UniPathway" id="UPA00904">
    <property type="reaction ID" value="UER00876"/>
</dbReference>
<dbReference type="UniPathway" id="UPA00904">
    <property type="reaction ID" value="UER00877"/>
</dbReference>
<dbReference type="PRO" id="PR:Q5PPH0"/>
<dbReference type="Proteomes" id="UP000002494">
    <property type="component" value="Chromosome 14"/>
</dbReference>
<dbReference type="Bgee" id="ENSRNOG00000002262">
    <property type="expression patterns" value="Expressed in frontal cortex and 20 other cell types or tissues"/>
</dbReference>
<dbReference type="GO" id="GO:0005737">
    <property type="term" value="C:cytoplasm"/>
    <property type="evidence" value="ECO:0007669"/>
    <property type="project" value="UniProtKB-SubCell"/>
</dbReference>
<dbReference type="GO" id="GO:0005634">
    <property type="term" value="C:nucleus"/>
    <property type="evidence" value="ECO:0007669"/>
    <property type="project" value="UniProtKB-SubCell"/>
</dbReference>
<dbReference type="GO" id="GO:0043874">
    <property type="term" value="F:acireductone synthase activity"/>
    <property type="evidence" value="ECO:0000250"/>
    <property type="project" value="UniProtKB"/>
</dbReference>
<dbReference type="GO" id="GO:0000287">
    <property type="term" value="F:magnesium ion binding"/>
    <property type="evidence" value="ECO:0007669"/>
    <property type="project" value="UniProtKB-UniRule"/>
</dbReference>
<dbReference type="GO" id="GO:0019509">
    <property type="term" value="P:L-methionine salvage from methylthioadenosine"/>
    <property type="evidence" value="ECO:0000250"/>
    <property type="project" value="UniProtKB"/>
</dbReference>
<dbReference type="CDD" id="cd01629">
    <property type="entry name" value="HAD_EP"/>
    <property type="match status" value="1"/>
</dbReference>
<dbReference type="FunFam" id="1.10.720.60:FF:000002">
    <property type="entry name" value="Enolase-phosphatase E1"/>
    <property type="match status" value="1"/>
</dbReference>
<dbReference type="FunFam" id="3.40.50.1000:FF:000102">
    <property type="entry name" value="Enolase-phosphatase E1"/>
    <property type="match status" value="1"/>
</dbReference>
<dbReference type="Gene3D" id="1.10.720.60">
    <property type="match status" value="1"/>
</dbReference>
<dbReference type="Gene3D" id="3.40.50.1000">
    <property type="entry name" value="HAD superfamily/HAD-like"/>
    <property type="match status" value="1"/>
</dbReference>
<dbReference type="HAMAP" id="MF_01681">
    <property type="entry name" value="Salvage_MtnC"/>
    <property type="match status" value="1"/>
</dbReference>
<dbReference type="HAMAP" id="MF_03117">
    <property type="entry name" value="Salvage_MtnC_euk"/>
    <property type="match status" value="1"/>
</dbReference>
<dbReference type="InterPro" id="IPR023943">
    <property type="entry name" value="Enolase-ppase_E1"/>
</dbReference>
<dbReference type="InterPro" id="IPR027511">
    <property type="entry name" value="ENOPH1_eukaryotes"/>
</dbReference>
<dbReference type="InterPro" id="IPR036412">
    <property type="entry name" value="HAD-like_sf"/>
</dbReference>
<dbReference type="InterPro" id="IPR006439">
    <property type="entry name" value="HAD-SF_hydro_IA"/>
</dbReference>
<dbReference type="InterPro" id="IPR023214">
    <property type="entry name" value="HAD_sf"/>
</dbReference>
<dbReference type="NCBIfam" id="TIGR01691">
    <property type="entry name" value="enolase-ppase"/>
    <property type="match status" value="1"/>
</dbReference>
<dbReference type="NCBIfam" id="TIGR01549">
    <property type="entry name" value="HAD-SF-IA-v1"/>
    <property type="match status" value="1"/>
</dbReference>
<dbReference type="PANTHER" id="PTHR20371">
    <property type="entry name" value="ENOLASE-PHOSPHATASE E1"/>
    <property type="match status" value="1"/>
</dbReference>
<dbReference type="PANTHER" id="PTHR20371:SF1">
    <property type="entry name" value="ENOLASE-PHOSPHATASE E1"/>
    <property type="match status" value="1"/>
</dbReference>
<dbReference type="Pfam" id="PF00702">
    <property type="entry name" value="Hydrolase"/>
    <property type="match status" value="1"/>
</dbReference>
<dbReference type="SFLD" id="SFLDF00044">
    <property type="entry name" value="enolase-phosphatase"/>
    <property type="match status" value="1"/>
</dbReference>
<dbReference type="SFLD" id="SFLDS00003">
    <property type="entry name" value="Haloacid_Dehalogenase"/>
    <property type="match status" value="1"/>
</dbReference>
<dbReference type="SUPFAM" id="SSF56784">
    <property type="entry name" value="HAD-like"/>
    <property type="match status" value="1"/>
</dbReference>
<accession>Q5PPH0</accession>
<organism>
    <name type="scientific">Rattus norvegicus</name>
    <name type="common">Rat</name>
    <dbReference type="NCBI Taxonomy" id="10116"/>
    <lineage>
        <taxon>Eukaryota</taxon>
        <taxon>Metazoa</taxon>
        <taxon>Chordata</taxon>
        <taxon>Craniata</taxon>
        <taxon>Vertebrata</taxon>
        <taxon>Euteleostomi</taxon>
        <taxon>Mammalia</taxon>
        <taxon>Eutheria</taxon>
        <taxon>Euarchontoglires</taxon>
        <taxon>Glires</taxon>
        <taxon>Rodentia</taxon>
        <taxon>Myomorpha</taxon>
        <taxon>Muroidea</taxon>
        <taxon>Muridae</taxon>
        <taxon>Murinae</taxon>
        <taxon>Rattus</taxon>
    </lineage>
</organism>
<keyword id="KW-0028">Amino-acid biosynthesis</keyword>
<keyword id="KW-0963">Cytoplasm</keyword>
<keyword id="KW-0378">Hydrolase</keyword>
<keyword id="KW-0460">Magnesium</keyword>
<keyword id="KW-0479">Metal-binding</keyword>
<keyword id="KW-0486">Methionine biosynthesis</keyword>
<keyword id="KW-0539">Nucleus</keyword>
<keyword id="KW-1185">Reference proteome</keyword>
<gene>
    <name type="primary">Enoph1</name>
    <name type="synonym">Masa</name>
</gene>
<comment type="function">
    <text evidence="1">Bifunctional enzyme that catalyzes the enolization of 2,3-diketo-5-methylthiopentyl-1-phosphate (DK-MTP-1-P) into the intermediate 2-hydroxy-3-keto-5-methylthiopentenyl-1-phosphate (HK-MTPenyl-1-P), which is then dephosphorylated to form the acireductone 1,2-dihydroxy-3-keto-5-methylthiopentene (DHK-MTPene).</text>
</comment>
<comment type="catalytic activity">
    <reaction evidence="1">
        <text>5-methylsulfanyl-2,3-dioxopentyl phosphate + H2O = 1,2-dihydroxy-5-(methylsulfanyl)pent-1-en-3-one + phosphate</text>
        <dbReference type="Rhea" id="RHEA:21700"/>
        <dbReference type="ChEBI" id="CHEBI:15377"/>
        <dbReference type="ChEBI" id="CHEBI:43474"/>
        <dbReference type="ChEBI" id="CHEBI:49252"/>
        <dbReference type="ChEBI" id="CHEBI:58828"/>
        <dbReference type="EC" id="3.1.3.77"/>
    </reaction>
</comment>
<comment type="cofactor">
    <cofactor evidence="1">
        <name>Mg(2+)</name>
        <dbReference type="ChEBI" id="CHEBI:18420"/>
    </cofactor>
    <text evidence="1">Binds 1 Mg(2+) ion per subunit.</text>
</comment>
<comment type="pathway">
    <text evidence="1">Amino-acid biosynthesis; L-methionine biosynthesis via salvage pathway; L-methionine from S-methyl-5-thio-alpha-D-ribose 1-phosphate: step 3/6.</text>
</comment>
<comment type="pathway">
    <text evidence="1">Amino-acid biosynthesis; L-methionine biosynthesis via salvage pathway; L-methionine from S-methyl-5-thio-alpha-D-ribose 1-phosphate: step 4/6.</text>
</comment>
<comment type="subunit">
    <text evidence="1">Monomer.</text>
</comment>
<comment type="subcellular location">
    <subcellularLocation>
        <location evidence="1">Cytoplasm</location>
    </subcellularLocation>
    <subcellularLocation>
        <location evidence="1">Nucleus</location>
    </subcellularLocation>
</comment>
<comment type="similarity">
    <text evidence="1">Belongs to the HAD-like hydrolase superfamily. MasA/MtnC family.</text>
</comment>
<proteinExistence type="evidence at transcript level"/>
<evidence type="ECO:0000255" key="1">
    <source>
        <dbReference type="HAMAP-Rule" id="MF_03117"/>
    </source>
</evidence>
<reference key="1">
    <citation type="journal article" date="2004" name="Genome Res.">
        <title>The status, quality, and expansion of the NIH full-length cDNA project: the Mammalian Gene Collection (MGC).</title>
        <authorList>
            <consortium name="The MGC Project Team"/>
        </authorList>
    </citation>
    <scope>NUCLEOTIDE SEQUENCE [LARGE SCALE MRNA]</scope>
    <source>
        <tissue>Brain</tissue>
    </source>
</reference>
<protein>
    <recommendedName>
        <fullName evidence="1">Enolase-phosphatase E1</fullName>
        <ecNumber evidence="1">3.1.3.77</ecNumber>
    </recommendedName>
    <alternativeName>
        <fullName evidence="1">2,3-diketo-5-methylthio-1-phosphopentane phosphatase</fullName>
    </alternativeName>
    <alternativeName>
        <fullName evidence="1">MASA homolog</fullName>
    </alternativeName>
</protein>